<sequence length="354" mass="39243">MAELKNDRYLRALLKEPVDVTPVWMMRQAGRYLPEYKATRAQAGDFMSLCKNHELACEVTLQPLRRYDLDAAILFSDILTVPDAMGLGLYFEAGEGPRFERPTDTIDAIKKLSIPDPEDELGYVMKAVSTIRRELNGAVPLIGFSGSPWTLATYMVEGGSSKTFEKIKKMAYAEPMALHMLLDKLADSVILYLNAQVANGAQSLMIFDSWGGALSHSAYREFSLRYMQKIIDGLTRFADGRKVPVTLFTKGGGLWLEAMAETGCDALGLDWTVDIADARRRVGHKVALQGNMDPSMLYAPIPRIEEEVGHILAGYGEGTGHVFNLGHGIHQHVDPEHAGAFIKAVHAQSKRYHK</sequence>
<protein>
    <recommendedName>
        <fullName evidence="1">Uroporphyrinogen decarboxylase</fullName>
        <shortName evidence="1">UPD</shortName>
        <shortName evidence="1">URO-D</shortName>
        <ecNumber evidence="1">4.1.1.37</ecNumber>
    </recommendedName>
</protein>
<dbReference type="EC" id="4.1.1.37" evidence="1"/>
<dbReference type="EMBL" id="CP001252">
    <property type="protein sequence ID" value="ACK48323.1"/>
    <property type="molecule type" value="Genomic_DNA"/>
</dbReference>
<dbReference type="RefSeq" id="WP_012588699.1">
    <property type="nucleotide sequence ID" value="NC_011663.1"/>
</dbReference>
<dbReference type="SMR" id="B8E642"/>
<dbReference type="KEGG" id="sbp:Sbal223_3846"/>
<dbReference type="HOGENOM" id="CLU_040933_0_0_6"/>
<dbReference type="UniPathway" id="UPA00251">
    <property type="reaction ID" value="UER00321"/>
</dbReference>
<dbReference type="Proteomes" id="UP000002507">
    <property type="component" value="Chromosome"/>
</dbReference>
<dbReference type="GO" id="GO:0005829">
    <property type="term" value="C:cytosol"/>
    <property type="evidence" value="ECO:0007669"/>
    <property type="project" value="TreeGrafter"/>
</dbReference>
<dbReference type="GO" id="GO:0004853">
    <property type="term" value="F:uroporphyrinogen decarboxylase activity"/>
    <property type="evidence" value="ECO:0007669"/>
    <property type="project" value="UniProtKB-UniRule"/>
</dbReference>
<dbReference type="GO" id="GO:0019353">
    <property type="term" value="P:protoporphyrinogen IX biosynthetic process from glutamate"/>
    <property type="evidence" value="ECO:0007669"/>
    <property type="project" value="TreeGrafter"/>
</dbReference>
<dbReference type="CDD" id="cd00717">
    <property type="entry name" value="URO-D"/>
    <property type="match status" value="1"/>
</dbReference>
<dbReference type="FunFam" id="3.20.20.210:FF:000001">
    <property type="entry name" value="Uroporphyrinogen decarboxylase"/>
    <property type="match status" value="1"/>
</dbReference>
<dbReference type="Gene3D" id="3.20.20.210">
    <property type="match status" value="1"/>
</dbReference>
<dbReference type="HAMAP" id="MF_00218">
    <property type="entry name" value="URO_D"/>
    <property type="match status" value="1"/>
</dbReference>
<dbReference type="InterPro" id="IPR038071">
    <property type="entry name" value="UROD/MetE-like_sf"/>
</dbReference>
<dbReference type="InterPro" id="IPR006361">
    <property type="entry name" value="Uroporphyrinogen_deCO2ase_HemE"/>
</dbReference>
<dbReference type="InterPro" id="IPR000257">
    <property type="entry name" value="Uroporphyrinogen_deCOase"/>
</dbReference>
<dbReference type="NCBIfam" id="TIGR01464">
    <property type="entry name" value="hemE"/>
    <property type="match status" value="1"/>
</dbReference>
<dbReference type="PANTHER" id="PTHR21091">
    <property type="entry name" value="METHYLTETRAHYDROFOLATE:HOMOCYSTEINE METHYLTRANSFERASE RELATED"/>
    <property type="match status" value="1"/>
</dbReference>
<dbReference type="PANTHER" id="PTHR21091:SF169">
    <property type="entry name" value="UROPORPHYRINOGEN DECARBOXYLASE"/>
    <property type="match status" value="1"/>
</dbReference>
<dbReference type="Pfam" id="PF01208">
    <property type="entry name" value="URO-D"/>
    <property type="match status" value="1"/>
</dbReference>
<dbReference type="SUPFAM" id="SSF51726">
    <property type="entry name" value="UROD/MetE-like"/>
    <property type="match status" value="1"/>
</dbReference>
<dbReference type="PROSITE" id="PS00906">
    <property type="entry name" value="UROD_1"/>
    <property type="match status" value="1"/>
</dbReference>
<dbReference type="PROSITE" id="PS00907">
    <property type="entry name" value="UROD_2"/>
    <property type="match status" value="1"/>
</dbReference>
<accession>B8E642</accession>
<name>DCUP_SHEB2</name>
<keyword id="KW-0963">Cytoplasm</keyword>
<keyword id="KW-0210">Decarboxylase</keyword>
<keyword id="KW-0456">Lyase</keyword>
<keyword id="KW-0627">Porphyrin biosynthesis</keyword>
<evidence type="ECO:0000255" key="1">
    <source>
        <dbReference type="HAMAP-Rule" id="MF_00218"/>
    </source>
</evidence>
<organism>
    <name type="scientific">Shewanella baltica (strain OS223)</name>
    <dbReference type="NCBI Taxonomy" id="407976"/>
    <lineage>
        <taxon>Bacteria</taxon>
        <taxon>Pseudomonadati</taxon>
        <taxon>Pseudomonadota</taxon>
        <taxon>Gammaproteobacteria</taxon>
        <taxon>Alteromonadales</taxon>
        <taxon>Shewanellaceae</taxon>
        <taxon>Shewanella</taxon>
    </lineage>
</organism>
<reference key="1">
    <citation type="submission" date="2008-12" db="EMBL/GenBank/DDBJ databases">
        <title>Complete sequence of chromosome of Shewanella baltica OS223.</title>
        <authorList>
            <consortium name="US DOE Joint Genome Institute"/>
            <person name="Lucas S."/>
            <person name="Copeland A."/>
            <person name="Lapidus A."/>
            <person name="Glavina del Rio T."/>
            <person name="Dalin E."/>
            <person name="Tice H."/>
            <person name="Bruce D."/>
            <person name="Goodwin L."/>
            <person name="Pitluck S."/>
            <person name="Chertkov O."/>
            <person name="Meincke L."/>
            <person name="Brettin T."/>
            <person name="Detter J.C."/>
            <person name="Han C."/>
            <person name="Kuske C.R."/>
            <person name="Larimer F."/>
            <person name="Land M."/>
            <person name="Hauser L."/>
            <person name="Kyrpides N."/>
            <person name="Ovchinnikova G."/>
            <person name="Brettar I."/>
            <person name="Rodrigues J."/>
            <person name="Konstantinidis K."/>
            <person name="Tiedje J."/>
        </authorList>
    </citation>
    <scope>NUCLEOTIDE SEQUENCE [LARGE SCALE GENOMIC DNA]</scope>
    <source>
        <strain>OS223</strain>
    </source>
</reference>
<proteinExistence type="inferred from homology"/>
<gene>
    <name evidence="1" type="primary">hemE</name>
    <name type="ordered locus">Sbal223_3846</name>
</gene>
<feature type="chain" id="PRO_1000197538" description="Uroporphyrinogen decarboxylase">
    <location>
        <begin position="1"/>
        <end position="354"/>
    </location>
</feature>
<feature type="binding site" evidence="1">
    <location>
        <begin position="27"/>
        <end position="31"/>
    </location>
    <ligand>
        <name>substrate</name>
    </ligand>
</feature>
<feature type="binding site" evidence="1">
    <location>
        <position position="77"/>
    </location>
    <ligand>
        <name>substrate</name>
    </ligand>
</feature>
<feature type="binding site" evidence="1">
    <location>
        <position position="154"/>
    </location>
    <ligand>
        <name>substrate</name>
    </ligand>
</feature>
<feature type="binding site" evidence="1">
    <location>
        <position position="209"/>
    </location>
    <ligand>
        <name>substrate</name>
    </ligand>
</feature>
<feature type="binding site" evidence="1">
    <location>
        <position position="327"/>
    </location>
    <ligand>
        <name>substrate</name>
    </ligand>
</feature>
<feature type="site" description="Transition state stabilizer" evidence="1">
    <location>
        <position position="77"/>
    </location>
</feature>
<comment type="function">
    <text evidence="1">Catalyzes the decarboxylation of four acetate groups of uroporphyrinogen-III to yield coproporphyrinogen-III.</text>
</comment>
<comment type="catalytic activity">
    <reaction evidence="1">
        <text>uroporphyrinogen III + 4 H(+) = coproporphyrinogen III + 4 CO2</text>
        <dbReference type="Rhea" id="RHEA:19865"/>
        <dbReference type="ChEBI" id="CHEBI:15378"/>
        <dbReference type="ChEBI" id="CHEBI:16526"/>
        <dbReference type="ChEBI" id="CHEBI:57308"/>
        <dbReference type="ChEBI" id="CHEBI:57309"/>
        <dbReference type="EC" id="4.1.1.37"/>
    </reaction>
</comment>
<comment type="pathway">
    <text evidence="1">Porphyrin-containing compound metabolism; protoporphyrin-IX biosynthesis; coproporphyrinogen-III from 5-aminolevulinate: step 4/4.</text>
</comment>
<comment type="subunit">
    <text evidence="1">Homodimer.</text>
</comment>
<comment type="subcellular location">
    <subcellularLocation>
        <location evidence="1">Cytoplasm</location>
    </subcellularLocation>
</comment>
<comment type="similarity">
    <text evidence="1">Belongs to the uroporphyrinogen decarboxylase family.</text>
</comment>